<name>IMP01_NAUMA</name>
<proteinExistence type="evidence at protein level"/>
<reference key="1">
    <citation type="journal article" date="2009" name="ChemBioChem">
        <title>Evolution of nacre: biochemistry and 'shellomics' of the shell organic matrix of the cephalopod Nautilus macromphalus.</title>
        <authorList>
            <person name="Marie B."/>
            <person name="Marin F."/>
            <person name="Marie A."/>
            <person name="Bedouet L."/>
            <person name="Dubost L."/>
            <person name="Alcaraz G."/>
            <person name="Milet C."/>
            <person name="Luquet G."/>
        </authorList>
    </citation>
    <scope>PROTEIN SEQUENCE</scope>
    <scope>TISSUE SPECIFICITY</scope>
    <source>
        <tissue>Shell</tissue>
    </source>
</reference>
<comment type="tissue specificity">
    <text evidence="1">Nacreous layer of shell.</text>
</comment>
<keyword id="KW-0903">Direct protein sequencing</keyword>
<evidence type="ECO:0000269" key="1">
    <source>
    </source>
</evidence>
<evidence type="ECO:0000303" key="2">
    <source>
    </source>
</evidence>
<accession>P85389</accession>
<feature type="chain" id="PRO_0000371462" description="Uncharacterized protein IMPP1">
    <location>
        <begin position="1" status="less than"/>
        <end position="6" status="greater than"/>
    </location>
</feature>
<feature type="non-terminal residue" evidence="2">
    <location>
        <position position="1"/>
    </location>
</feature>
<feature type="non-terminal residue" evidence="2">
    <location>
        <position position="6"/>
    </location>
</feature>
<protein>
    <recommendedName>
        <fullName evidence="2">Uncharacterized protein IMPP1</fullName>
    </recommendedName>
</protein>
<sequence length="6" mass="744">FVSTYK</sequence>
<organism>
    <name type="scientific">Nautilus macromphalus</name>
    <name type="common">Bellybutton nautilus</name>
    <dbReference type="NCBI Taxonomy" id="34576"/>
    <lineage>
        <taxon>Eukaryota</taxon>
        <taxon>Metazoa</taxon>
        <taxon>Spiralia</taxon>
        <taxon>Lophotrochozoa</taxon>
        <taxon>Mollusca</taxon>
        <taxon>Cephalopoda</taxon>
        <taxon>Nautiloidea</taxon>
        <taxon>Nautilida</taxon>
        <taxon>Nautilidae</taxon>
        <taxon>Nautilus</taxon>
    </lineage>
</organism>